<comment type="function">
    <text evidence="6 11">Part of the CASK/TBR1/TSPYL2 transcriptional complex which modulates gene expression in response to neuronal synaptic activity, probably by facilitating nucleosome assembly. May inhibit cell proliferation by inducing p53-dependent CDKN1A expression.</text>
</comment>
<comment type="subunit">
    <text evidence="1">Interacts with histones. Interacts with CASK. Part of a complex containing CASK, TBR1 and TSPYL2 (By similarity).</text>
</comment>
<comment type="interaction">
    <interactant intactId="EBI-947459">
        <id>Q9H2G4</id>
    </interactant>
    <interactant intactId="EBI-2602396">
        <id>Q9ULW3</id>
        <label>ABT1</label>
    </interactant>
    <organismsDiffer>false</organismsDiffer>
    <experiments>5</experiments>
</comment>
<comment type="interaction">
    <interactant intactId="EBI-947459">
        <id>Q9H2G4</id>
    </interactant>
    <interactant intactId="EBI-10255023">
        <id>Q6ZN18-2</id>
        <label>AEBP2</label>
    </interactant>
    <organismsDiffer>false</organismsDiffer>
    <experiments>3</experiments>
</comment>
<comment type="interaction">
    <interactant intactId="EBI-947459">
        <id>Q9H2G4</id>
    </interactant>
    <interactant intactId="EBI-741885">
        <id>Q96LK0</id>
        <label>CEP19</label>
    </interactant>
    <organismsDiffer>false</organismsDiffer>
    <experiments>3</experiments>
</comment>
<comment type="interaction">
    <interactant intactId="EBI-947459">
        <id>Q9H2G4</id>
    </interactant>
    <interactant intactId="EBI-347804">
        <id>P68400</id>
        <label>CSNK2A1</label>
    </interactant>
    <organismsDiffer>false</organismsDiffer>
    <experiments>5</experiments>
</comment>
<comment type="interaction">
    <interactant intactId="EBI-947459">
        <id>Q9H2G4</id>
    </interactant>
    <interactant intactId="EBI-12142839">
        <id>U3KQK0</id>
        <label>H2BC15</label>
    </interactant>
    <organismsDiffer>false</organismsDiffer>
    <experiments>3</experiments>
</comment>
<comment type="interaction">
    <interactant intactId="EBI-947459">
        <id>Q9H2G4</id>
    </interactant>
    <interactant intactId="EBI-7261162">
        <id>Q9UGU5</id>
        <label>HMGXB4</label>
    </interactant>
    <organismsDiffer>false</organismsDiffer>
    <experiments>3</experiments>
</comment>
<comment type="interaction">
    <interactant intactId="EBI-947459">
        <id>Q9H2G4</id>
    </interactant>
    <interactant intactId="EBI-715611">
        <id>Q9C086</id>
        <label>INO80B</label>
    </interactant>
    <organismsDiffer>false</organismsDiffer>
    <experiments>3</experiments>
</comment>
<comment type="interaction">
    <interactant intactId="EBI-947459">
        <id>Q9H2G4</id>
    </interactant>
    <interactant intactId="EBI-1047962">
        <id>Q4FZB7</id>
        <label>KMT5B</label>
    </interactant>
    <organismsDiffer>false</organismsDiffer>
    <experiments>3</experiments>
</comment>
<comment type="interaction">
    <interactant intactId="EBI-947459">
        <id>Q9H2G4</id>
    </interactant>
    <interactant intactId="EBI-11959475">
        <id>P25791-3</id>
        <label>LMO2</label>
    </interactant>
    <organismsDiffer>false</organismsDiffer>
    <experiments>3</experiments>
</comment>
<comment type="interaction">
    <interactant intactId="EBI-947459">
        <id>Q9H2G4</id>
    </interactant>
    <interactant intactId="EBI-739832">
        <id>Q8TBB1</id>
        <label>LNX1</label>
    </interactant>
    <organismsDiffer>false</organismsDiffer>
    <experiments>3</experiments>
</comment>
<comment type="interaction">
    <interactant intactId="EBI-947459">
        <id>Q9H2G4</id>
    </interactant>
    <interactant intactId="EBI-348259">
        <id>Q96EZ8</id>
        <label>MCRS1</label>
    </interactant>
    <organismsDiffer>false</organismsDiffer>
    <experiments>5</experiments>
</comment>
<comment type="interaction">
    <interactant intactId="EBI-947459">
        <id>Q9H2G4</id>
    </interactant>
    <interactant intactId="EBI-716098">
        <id>Q9UGY1</id>
        <label>NOL12</label>
    </interactant>
    <organismsDiffer>false</organismsDiffer>
    <experiments>3</experiments>
</comment>
<comment type="interaction">
    <interactant intactId="EBI-947459">
        <id>Q9H2G4</id>
    </interactant>
    <interactant intactId="EBI-720156">
        <id>Q9NZM5</id>
        <label>NOP53</label>
    </interactant>
    <organismsDiffer>false</organismsDiffer>
    <experiments>5</experiments>
</comment>
<comment type="interaction">
    <interactant intactId="EBI-947459">
        <id>Q9H2G4</id>
    </interactant>
    <interactant intactId="EBI-2339674">
        <id>Q5T6S3</id>
        <label>PHF19</label>
    </interactant>
    <organismsDiffer>false</organismsDiffer>
    <experiments>3</experiments>
</comment>
<comment type="interaction">
    <interactant intactId="EBI-947459">
        <id>Q9H2G4</id>
    </interactant>
    <interactant intactId="EBI-12041043">
        <id>Q96T37-3</id>
        <label>RBM15</label>
    </interactant>
    <organismsDiffer>false</organismsDiffer>
    <experiments>3</experiments>
</comment>
<comment type="interaction">
    <interactant intactId="EBI-947459">
        <id>Q9H2G4</id>
    </interactant>
    <interactant intactId="EBI-12002474">
        <id>Q2KHN1</id>
        <label>RNF151</label>
    </interactant>
    <organismsDiffer>false</organismsDiffer>
    <experiments>3</experiments>
</comment>
<comment type="interaction">
    <interactant intactId="EBI-947459">
        <id>Q9H2G4</id>
    </interactant>
    <interactant intactId="EBI-353054">
        <id>P62851</id>
        <label>RPS25</label>
    </interactant>
    <organismsDiffer>false</organismsDiffer>
    <experiments>3</experiments>
</comment>
<comment type="interaction">
    <interactant intactId="EBI-947459">
        <id>Q9H2G4</id>
    </interactant>
    <interactant intactId="EBI-749336">
        <id>Q8TAD8</id>
        <label>SNIP1</label>
    </interactant>
    <organismsDiffer>false</organismsDiffer>
    <experiments>3</experiments>
</comment>
<comment type="interaction">
    <interactant intactId="EBI-947459">
        <id>Q9H2G4</id>
    </interactant>
    <interactant intactId="EBI-1045338">
        <id>Q96EY4</id>
        <label>TMA16</label>
    </interactant>
    <organismsDiffer>false</organismsDiffer>
    <experiments>3</experiments>
</comment>
<comment type="interaction">
    <interactant intactId="EBI-947459">
        <id>Q9H2G4</id>
    </interactant>
    <interactant intactId="EBI-12151635">
        <id>P13805-3</id>
        <label>TNNT1</label>
    </interactant>
    <organismsDiffer>false</organismsDiffer>
    <experiments>3</experiments>
</comment>
<comment type="interaction">
    <interactant intactId="EBI-947459">
        <id>Q9H2G4</id>
    </interactant>
    <interactant intactId="EBI-723389">
        <id>Q6FI91</id>
        <label>TSPYL</label>
    </interactant>
    <organismsDiffer>false</organismsDiffer>
    <experiments>3</experiments>
</comment>
<comment type="interaction">
    <interactant intactId="EBI-947459">
        <id>Q9H2G4</id>
    </interactant>
    <interactant intactId="EBI-2340004">
        <id>Q9HD64</id>
        <label>XAGE1B</label>
    </interactant>
    <organismsDiffer>false</organismsDiffer>
    <experiments>3</experiments>
</comment>
<comment type="interaction">
    <interactant intactId="EBI-947459">
        <id>Q9H2G4</id>
    </interactant>
    <interactant intactId="EBI-744471">
        <id>O43167</id>
        <label>ZBTB24</label>
    </interactant>
    <organismsDiffer>false</organismsDiffer>
    <experiments>3</experiments>
</comment>
<comment type="interaction">
    <interactant intactId="EBI-947459">
        <id>Q9H2G4</id>
    </interactant>
    <interactant intactId="EBI-744864">
        <id>P10074</id>
        <label>ZBTB48</label>
    </interactant>
    <organismsDiffer>false</organismsDiffer>
    <experiments>3</experiments>
</comment>
<comment type="interaction">
    <interactant intactId="EBI-947459">
        <id>Q9H2G4</id>
    </interactant>
    <interactant intactId="EBI-2555749">
        <id>Q6P2D0</id>
        <label>ZFP1</label>
    </interactant>
    <organismsDiffer>false</organismsDiffer>
    <experiments>3</experiments>
</comment>
<comment type="interaction">
    <interactant intactId="EBI-947459">
        <id>Q9H2G4</id>
    </interactant>
    <interactant intactId="EBI-1052613">
        <id>Q96JP5</id>
        <label>ZFP91</label>
    </interactant>
    <organismsDiffer>false</organismsDiffer>
    <experiments>3</experiments>
</comment>
<comment type="interaction">
    <interactant intactId="EBI-947459">
        <id>Q9H2G4</id>
    </interactant>
    <interactant intactId="EBI-8831272">
        <id>Q8ND82</id>
        <label>ZNF280C</label>
    </interactant>
    <organismsDiffer>false</organismsDiffer>
    <experiments>3</experiments>
</comment>
<comment type="interaction">
    <interactant intactId="EBI-947459">
        <id>Q9H2G4</id>
    </interactant>
    <interactant intactId="EBI-10754950">
        <id>Q9HBT8</id>
        <label>ZNF286A</label>
    </interactant>
    <organismsDiffer>false</organismsDiffer>
    <experiments>3</experiments>
</comment>
<comment type="interaction">
    <interactant intactId="EBI-947459">
        <id>Q9H2G4</id>
    </interactant>
    <interactant intactId="EBI-7233259">
        <id>Q86UD4</id>
        <label>ZNF329</label>
    </interactant>
    <organismsDiffer>false</organismsDiffer>
    <experiments>3</experiments>
</comment>
<comment type="interaction">
    <interactant intactId="EBI-947459">
        <id>Q9H2G4</id>
    </interactant>
    <interactant intactId="EBI-10283126">
        <id>Q96C55</id>
        <label>ZNF524</label>
    </interactant>
    <organismsDiffer>false</organismsDiffer>
    <experiments>3</experiments>
</comment>
<comment type="interaction">
    <interactant intactId="EBI-947459">
        <id>Q9H2G4</id>
    </interactant>
    <interactant intactId="EBI-1210558">
        <id>Q8N1G0</id>
        <label>ZNF687</label>
    </interactant>
    <organismsDiffer>false</organismsDiffer>
    <experiments>4</experiments>
</comment>
<comment type="interaction">
    <interactant intactId="EBI-947459">
        <id>Q9H2G4</id>
    </interactant>
    <interactant intactId="EBI-7149881">
        <id>Q96BV0</id>
        <label>ZNF775</label>
    </interactant>
    <organismsDiffer>false</organismsDiffer>
    <experiments>3</experiments>
</comment>
<comment type="interaction">
    <interactant intactId="EBI-947459">
        <id>Q9H2G4</id>
    </interactant>
    <interactant intactId="EBI-5667516">
        <id>Q9Y2P0</id>
        <label>ZNF835</label>
    </interactant>
    <organismsDiffer>false</organismsDiffer>
    <experiments>3</experiments>
</comment>
<comment type="subcellular location">
    <subcellularLocation>
        <location evidence="5 6">Nucleus</location>
    </subcellularLocation>
    <subcellularLocation>
        <location evidence="1">Cytoplasm</location>
    </subcellularLocation>
    <text evidence="1">Enriched in transcriptionally active regions of chromatin in neurons.</text>
</comment>
<comment type="tissue specificity">
    <text evidence="4 5 7 9">Ubiquitously expressed, with highest levels in brain, testis and heart, and lowest levels in liver and pancreas.</text>
</comment>
<comment type="induction">
    <text evidence="5 8 10">Up-regulated in growth-arrested T-cells. Induced by TGFB1 and all-trans retinoic acid (ATRA) in lung cancer cells (at protein level).</text>
</comment>
<comment type="PTM">
    <text evidence="14">Phosphorylation at Ser-20 and/or Thr-340 impairs function on cell proliferation.</text>
</comment>
<comment type="miscellaneous">
    <text evidence="1">Synaptic activity down-regulates TSPYL2 protein levels by inducing rapid proteasomal degradation.</text>
</comment>
<comment type="miscellaneous">
    <text>Subject to X inactivation.</text>
</comment>
<comment type="similarity">
    <text evidence="13">Belongs to the nucleosome assembly protein (NAP) family.</text>
</comment>
<comment type="sequence caution" evidence="13">
    <conflict type="erroneous initiation">
        <sequence resource="EMBL-CDS" id="AAG53596"/>
    </conflict>
    <text>Truncated N-terminus.</text>
</comment>
<reference key="1">
    <citation type="journal article" date="2001" name="J. Biol. Chem.">
        <title>SET-related cell division autoantigen-1 (CDA1) arrests cell growth.</title>
        <authorList>
            <person name="Chai Z."/>
            <person name="Sarcevic B."/>
            <person name="Mawson A."/>
            <person name="Toh B.-H."/>
        </authorList>
    </citation>
    <scope>NUCLEOTIDE SEQUENCE [MRNA]</scope>
    <scope>SUBCELLULAR LOCATION</scope>
    <scope>PHOSPHORYLATION AT SER-20 AND THR-340</scope>
    <scope>MUTAGENESIS OF SER-20 AND THR-340</scope>
    <scope>FUNCTION</scope>
    <source>
        <tissue>Testis</tissue>
    </source>
</reference>
<reference key="2">
    <citation type="journal article" date="2001" name="Proc. Natl. Acad. Sci. U.S.A.">
        <title>Serological detection of cutaneous T-cell lymphoma-associated antigens.</title>
        <authorList>
            <person name="Eichmueller S."/>
            <person name="Usener D."/>
            <person name="Dummer R."/>
            <person name="Stein A."/>
            <person name="Thiel D."/>
            <person name="Schadendorf D."/>
        </authorList>
    </citation>
    <scope>NUCLEOTIDE SEQUENCE [MRNA]</scope>
    <scope>TISSUE SPECIFICITY</scope>
    <source>
        <tissue>Testis</tissue>
    </source>
</reference>
<reference key="3">
    <citation type="journal article" date="2007" name="BMC Genomics">
        <title>The full-ORF clone resource of the German cDNA consortium.</title>
        <authorList>
            <person name="Bechtel S."/>
            <person name="Rosenfelder H."/>
            <person name="Duda A."/>
            <person name="Schmidt C.P."/>
            <person name="Ernst U."/>
            <person name="Wellenreuther R."/>
            <person name="Mehrle A."/>
            <person name="Schuster C."/>
            <person name="Bahr A."/>
            <person name="Bloecker H."/>
            <person name="Heubner D."/>
            <person name="Hoerlein A."/>
            <person name="Michel G."/>
            <person name="Wedler H."/>
            <person name="Koehrer K."/>
            <person name="Ottenwaelder B."/>
            <person name="Poustka A."/>
            <person name="Wiemann S."/>
            <person name="Schupp I."/>
        </authorList>
    </citation>
    <scope>NUCLEOTIDE SEQUENCE [LARGE SCALE MRNA]</scope>
    <source>
        <tissue>Amygdala</tissue>
    </source>
</reference>
<reference key="4">
    <citation type="journal article" date="2005" name="Nature">
        <title>The DNA sequence of the human X chromosome.</title>
        <authorList>
            <person name="Ross M.T."/>
            <person name="Grafham D.V."/>
            <person name="Coffey A.J."/>
            <person name="Scherer S."/>
            <person name="McLay K."/>
            <person name="Muzny D."/>
            <person name="Platzer M."/>
            <person name="Howell G.R."/>
            <person name="Burrows C."/>
            <person name="Bird C.P."/>
            <person name="Frankish A."/>
            <person name="Lovell F.L."/>
            <person name="Howe K.L."/>
            <person name="Ashurst J.L."/>
            <person name="Fulton R.S."/>
            <person name="Sudbrak R."/>
            <person name="Wen G."/>
            <person name="Jones M.C."/>
            <person name="Hurles M.E."/>
            <person name="Andrews T.D."/>
            <person name="Scott C.E."/>
            <person name="Searle S."/>
            <person name="Ramser J."/>
            <person name="Whittaker A."/>
            <person name="Deadman R."/>
            <person name="Carter N.P."/>
            <person name="Hunt S.E."/>
            <person name="Chen R."/>
            <person name="Cree A."/>
            <person name="Gunaratne P."/>
            <person name="Havlak P."/>
            <person name="Hodgson A."/>
            <person name="Metzker M.L."/>
            <person name="Richards S."/>
            <person name="Scott G."/>
            <person name="Steffen D."/>
            <person name="Sodergren E."/>
            <person name="Wheeler D.A."/>
            <person name="Worley K.C."/>
            <person name="Ainscough R."/>
            <person name="Ambrose K.D."/>
            <person name="Ansari-Lari M.A."/>
            <person name="Aradhya S."/>
            <person name="Ashwell R.I."/>
            <person name="Babbage A.K."/>
            <person name="Bagguley C.L."/>
            <person name="Ballabio A."/>
            <person name="Banerjee R."/>
            <person name="Barker G.E."/>
            <person name="Barlow K.F."/>
            <person name="Barrett I.P."/>
            <person name="Bates K.N."/>
            <person name="Beare D.M."/>
            <person name="Beasley H."/>
            <person name="Beasley O."/>
            <person name="Beck A."/>
            <person name="Bethel G."/>
            <person name="Blechschmidt K."/>
            <person name="Brady N."/>
            <person name="Bray-Allen S."/>
            <person name="Bridgeman A.M."/>
            <person name="Brown A.J."/>
            <person name="Brown M.J."/>
            <person name="Bonnin D."/>
            <person name="Bruford E.A."/>
            <person name="Buhay C."/>
            <person name="Burch P."/>
            <person name="Burford D."/>
            <person name="Burgess J."/>
            <person name="Burrill W."/>
            <person name="Burton J."/>
            <person name="Bye J.M."/>
            <person name="Carder C."/>
            <person name="Carrel L."/>
            <person name="Chako J."/>
            <person name="Chapman J.C."/>
            <person name="Chavez D."/>
            <person name="Chen E."/>
            <person name="Chen G."/>
            <person name="Chen Y."/>
            <person name="Chen Z."/>
            <person name="Chinault C."/>
            <person name="Ciccodicola A."/>
            <person name="Clark S.Y."/>
            <person name="Clarke G."/>
            <person name="Clee C.M."/>
            <person name="Clegg S."/>
            <person name="Clerc-Blankenburg K."/>
            <person name="Clifford K."/>
            <person name="Cobley V."/>
            <person name="Cole C.G."/>
            <person name="Conquer J.S."/>
            <person name="Corby N."/>
            <person name="Connor R.E."/>
            <person name="David R."/>
            <person name="Davies J."/>
            <person name="Davis C."/>
            <person name="Davis J."/>
            <person name="Delgado O."/>
            <person name="Deshazo D."/>
            <person name="Dhami P."/>
            <person name="Ding Y."/>
            <person name="Dinh H."/>
            <person name="Dodsworth S."/>
            <person name="Draper H."/>
            <person name="Dugan-Rocha S."/>
            <person name="Dunham A."/>
            <person name="Dunn M."/>
            <person name="Durbin K.J."/>
            <person name="Dutta I."/>
            <person name="Eades T."/>
            <person name="Ellwood M."/>
            <person name="Emery-Cohen A."/>
            <person name="Errington H."/>
            <person name="Evans K.L."/>
            <person name="Faulkner L."/>
            <person name="Francis F."/>
            <person name="Frankland J."/>
            <person name="Fraser A.E."/>
            <person name="Galgoczy P."/>
            <person name="Gilbert J."/>
            <person name="Gill R."/>
            <person name="Gloeckner G."/>
            <person name="Gregory S.G."/>
            <person name="Gribble S."/>
            <person name="Griffiths C."/>
            <person name="Grocock R."/>
            <person name="Gu Y."/>
            <person name="Gwilliam R."/>
            <person name="Hamilton C."/>
            <person name="Hart E.A."/>
            <person name="Hawes A."/>
            <person name="Heath P.D."/>
            <person name="Heitmann K."/>
            <person name="Hennig S."/>
            <person name="Hernandez J."/>
            <person name="Hinzmann B."/>
            <person name="Ho S."/>
            <person name="Hoffs M."/>
            <person name="Howden P.J."/>
            <person name="Huckle E.J."/>
            <person name="Hume J."/>
            <person name="Hunt P.J."/>
            <person name="Hunt A.R."/>
            <person name="Isherwood J."/>
            <person name="Jacob L."/>
            <person name="Johnson D."/>
            <person name="Jones S."/>
            <person name="de Jong P.J."/>
            <person name="Joseph S.S."/>
            <person name="Keenan S."/>
            <person name="Kelly S."/>
            <person name="Kershaw J.K."/>
            <person name="Khan Z."/>
            <person name="Kioschis P."/>
            <person name="Klages S."/>
            <person name="Knights A.J."/>
            <person name="Kosiura A."/>
            <person name="Kovar-Smith C."/>
            <person name="Laird G.K."/>
            <person name="Langford C."/>
            <person name="Lawlor S."/>
            <person name="Leversha M."/>
            <person name="Lewis L."/>
            <person name="Liu W."/>
            <person name="Lloyd C."/>
            <person name="Lloyd D.M."/>
            <person name="Loulseged H."/>
            <person name="Loveland J.E."/>
            <person name="Lovell J.D."/>
            <person name="Lozado R."/>
            <person name="Lu J."/>
            <person name="Lyne R."/>
            <person name="Ma J."/>
            <person name="Maheshwari M."/>
            <person name="Matthews L.H."/>
            <person name="McDowall J."/>
            <person name="McLaren S."/>
            <person name="McMurray A."/>
            <person name="Meidl P."/>
            <person name="Meitinger T."/>
            <person name="Milne S."/>
            <person name="Miner G."/>
            <person name="Mistry S.L."/>
            <person name="Morgan M."/>
            <person name="Morris S."/>
            <person name="Mueller I."/>
            <person name="Mullikin J.C."/>
            <person name="Nguyen N."/>
            <person name="Nordsiek G."/>
            <person name="Nyakatura G."/>
            <person name="O'dell C.N."/>
            <person name="Okwuonu G."/>
            <person name="Palmer S."/>
            <person name="Pandian R."/>
            <person name="Parker D."/>
            <person name="Parrish J."/>
            <person name="Pasternak S."/>
            <person name="Patel D."/>
            <person name="Pearce A.V."/>
            <person name="Pearson D.M."/>
            <person name="Pelan S.E."/>
            <person name="Perez L."/>
            <person name="Porter K.M."/>
            <person name="Ramsey Y."/>
            <person name="Reichwald K."/>
            <person name="Rhodes S."/>
            <person name="Ridler K.A."/>
            <person name="Schlessinger D."/>
            <person name="Schueler M.G."/>
            <person name="Sehra H.K."/>
            <person name="Shaw-Smith C."/>
            <person name="Shen H."/>
            <person name="Sheridan E.M."/>
            <person name="Shownkeen R."/>
            <person name="Skuce C.D."/>
            <person name="Smith M.L."/>
            <person name="Sotheran E.C."/>
            <person name="Steingruber H.E."/>
            <person name="Steward C.A."/>
            <person name="Storey R."/>
            <person name="Swann R.M."/>
            <person name="Swarbreck D."/>
            <person name="Tabor P.E."/>
            <person name="Taudien S."/>
            <person name="Taylor T."/>
            <person name="Teague B."/>
            <person name="Thomas K."/>
            <person name="Thorpe A."/>
            <person name="Timms K."/>
            <person name="Tracey A."/>
            <person name="Trevanion S."/>
            <person name="Tromans A.C."/>
            <person name="d'Urso M."/>
            <person name="Verduzco D."/>
            <person name="Villasana D."/>
            <person name="Waldron L."/>
            <person name="Wall M."/>
            <person name="Wang Q."/>
            <person name="Warren J."/>
            <person name="Warry G.L."/>
            <person name="Wei X."/>
            <person name="West A."/>
            <person name="Whitehead S.L."/>
            <person name="Whiteley M.N."/>
            <person name="Wilkinson J.E."/>
            <person name="Willey D.L."/>
            <person name="Williams G."/>
            <person name="Williams L."/>
            <person name="Williamson A."/>
            <person name="Williamson H."/>
            <person name="Wilming L."/>
            <person name="Woodmansey R.L."/>
            <person name="Wray P.W."/>
            <person name="Yen J."/>
            <person name="Zhang J."/>
            <person name="Zhou J."/>
            <person name="Zoghbi H."/>
            <person name="Zorilla S."/>
            <person name="Buck D."/>
            <person name="Reinhardt R."/>
            <person name="Poustka A."/>
            <person name="Rosenthal A."/>
            <person name="Lehrach H."/>
            <person name="Meindl A."/>
            <person name="Minx P.J."/>
            <person name="Hillier L.W."/>
            <person name="Willard H.F."/>
            <person name="Wilson R.K."/>
            <person name="Waterston R.H."/>
            <person name="Rice C.M."/>
            <person name="Vaudin M."/>
            <person name="Coulson A."/>
            <person name="Nelson D.L."/>
            <person name="Weinstock G."/>
            <person name="Sulston J.E."/>
            <person name="Durbin R.M."/>
            <person name="Hubbard T."/>
            <person name="Gibbs R.A."/>
            <person name="Beck S."/>
            <person name="Rogers J."/>
            <person name="Bentley D.R."/>
        </authorList>
    </citation>
    <scope>NUCLEOTIDE SEQUENCE [LARGE SCALE GENOMIC DNA]</scope>
</reference>
<reference key="5">
    <citation type="journal article" date="2004" name="Genome Res.">
        <title>The status, quality, and expansion of the NIH full-length cDNA project: the Mammalian Gene Collection (MGC).</title>
        <authorList>
            <consortium name="The MGC Project Team"/>
        </authorList>
    </citation>
    <scope>NUCLEOTIDE SEQUENCE [LARGE SCALE MRNA]</scope>
    <source>
        <tissue>Lung</tissue>
        <tissue>Placenta</tissue>
    </source>
</reference>
<reference key="6">
    <citation type="journal article" date="2001" name="Genomics">
        <title>Identification of Differentially expressed nucleolar TGF-beta1 target (DENTT) in human lung cancer cells that is a new member of the TSPY/SET/NAP-1 superfamily.</title>
        <authorList>
            <person name="Ozbun L.L."/>
            <person name="You L."/>
            <person name="Kiang S."/>
            <person name="Angdisen J."/>
            <person name="Martinez A."/>
            <person name="Jakowlew S.B."/>
        </authorList>
    </citation>
    <scope>NUCLEOTIDE SEQUENCE [MRNA] OF 42-693</scope>
    <scope>TISSUE SPECIFICITY</scope>
    <scope>SUBCELLULAR LOCATION</scope>
    <scope>INDUCTION BY TGFB1</scope>
</reference>
<reference key="7">
    <citation type="journal article" date="1998" name="Nat. Biotechnol.">
        <title>Selection system for genes encoding nuclear-targeted proteins.</title>
        <authorList>
            <person name="Ueki N."/>
            <person name="Oda T."/>
            <person name="Kondo M."/>
            <person name="Yano K."/>
            <person name="Noguchi T."/>
            <person name="Muramatsu M.-A."/>
        </authorList>
    </citation>
    <scope>NUCLEOTIDE SEQUENCE [LARGE SCALE MRNA] OF 208-693</scope>
    <source>
        <tissue>Fetal brain</tissue>
    </source>
</reference>
<reference key="8">
    <citation type="journal article" date="2002" name="Biochim. Biophys. Acta">
        <title>Isolation of differentially expressed genes in human heart tissues.</title>
        <authorList>
            <person name="Sun G."/>
            <person name="Yuen Chan S."/>
            <person name="Yuan Y."/>
            <person name="Wang Chan K."/>
            <person name="Qiu G."/>
            <person name="Sun K."/>
            <person name="Ping Leung M."/>
        </authorList>
    </citation>
    <scope>IDENTIFICATION</scope>
    <scope>TISSUE SPECIFICITY</scope>
</reference>
<reference key="9">
    <citation type="journal article" date="2004" name="Chromosome Res.">
        <title>TSPY, the candidate gonadoblastoma gene on the human Y chromosome, has a widely expressed homologue on the X -- implications for Y chromosome evolution.</title>
        <authorList>
            <person name="Delbridge M.L."/>
            <person name="Longepied G."/>
            <person name="Depetris D."/>
            <person name="Mattei M.-G."/>
            <person name="Disteche C.M."/>
            <person name="Marshall Graves J.A."/>
            <person name="Mitchell M.J."/>
        </authorList>
    </citation>
    <scope>IDENTIFICATION</scope>
    <scope>TISSUE SPECIFICITY</scope>
</reference>
<reference key="10">
    <citation type="journal article" date="2004" name="J. Biol. Chem.">
        <title>A constitutively active arylhydrocarbon receptor induces growth inhibition of jurkat T cells through changes in the expression of genes related to apoptosis and cell cycle arrest.</title>
        <authorList>
            <person name="Ito T."/>
            <person name="Tsukumo S."/>
            <person name="Suzuki N."/>
            <person name="Motohashi H."/>
            <person name="Yamamoto M."/>
            <person name="Fujii-Kuriyama Y."/>
            <person name="Mimura J."/>
            <person name="Lin T.-M."/>
            <person name="Peterson R.E."/>
            <person name="Tohyama C."/>
            <person name="Nohara K."/>
        </authorList>
    </citation>
    <scope>INDUCTION</scope>
</reference>
<reference key="11">
    <citation type="journal article" date="2005" name="Biochim. Biophys. Acta">
        <title>Differentially expressed nucleolar TGF-beta1 target (DENTT) shows tissue-specific nuclear and cytoplasmic localization and increases TGF-beta1-responsive transcription in primates.</title>
        <authorList>
            <person name="Ozbun L.L."/>
            <person name="Martinez A."/>
            <person name="Jakowlew S.B."/>
        </authorList>
    </citation>
    <scope>INDUCTION</scope>
</reference>
<reference key="12">
    <citation type="journal article" date="2007" name="J. Biol. Chem.">
        <title>Antiproliferative autoantigen CDA1 transcriptionally up-regulates p21(Waf1/Cip1) by activating p53 and MEK/ERK1/2 MAPK pathways.</title>
        <authorList>
            <person name="Tu Y."/>
            <person name="Wu W."/>
            <person name="Wu T."/>
            <person name="Cao Z."/>
            <person name="Wilkins R."/>
            <person name="Toh B.-H."/>
            <person name="Cooper M.E."/>
            <person name="Chai Z."/>
        </authorList>
    </citation>
    <scope>FUNCTION</scope>
</reference>
<reference key="13">
    <citation type="journal article" date="2008" name="Proc. Natl. Acad. Sci. U.S.A.">
        <title>A quantitative atlas of mitotic phosphorylation.</title>
        <authorList>
            <person name="Dephoure N."/>
            <person name="Zhou C."/>
            <person name="Villen J."/>
            <person name="Beausoleil S.A."/>
            <person name="Bakalarski C.E."/>
            <person name="Elledge S.J."/>
            <person name="Gygi S.P."/>
        </authorList>
    </citation>
    <scope>PHOSPHORYLATION [LARGE SCALE ANALYSIS] AT SER-18</scope>
    <scope>IDENTIFICATION BY MASS SPECTROMETRY [LARGE SCALE ANALYSIS]</scope>
    <source>
        <tissue>Cervix carcinoma</tissue>
    </source>
</reference>
<reference key="14">
    <citation type="journal article" date="2010" name="Sci. Signal.">
        <title>Quantitative phosphoproteomics reveals widespread full phosphorylation site occupancy during mitosis.</title>
        <authorList>
            <person name="Olsen J.V."/>
            <person name="Vermeulen M."/>
            <person name="Santamaria A."/>
            <person name="Kumar C."/>
            <person name="Miller M.L."/>
            <person name="Jensen L.J."/>
            <person name="Gnad F."/>
            <person name="Cox J."/>
            <person name="Jensen T.S."/>
            <person name="Nigg E.A."/>
            <person name="Brunak S."/>
            <person name="Mann M."/>
        </authorList>
    </citation>
    <scope>IDENTIFICATION BY MASS SPECTROMETRY [LARGE SCALE ANALYSIS]</scope>
    <source>
        <tissue>Cervix carcinoma</tissue>
    </source>
</reference>
<reference key="15">
    <citation type="journal article" date="2017" name="Nat. Struct. Mol. Biol.">
        <title>Site-specific mapping of the human SUMO proteome reveals co-modification with phosphorylation.</title>
        <authorList>
            <person name="Hendriks I.A."/>
            <person name="Lyon D."/>
            <person name="Young C."/>
            <person name="Jensen L.J."/>
            <person name="Vertegaal A.C."/>
            <person name="Nielsen M.L."/>
        </authorList>
    </citation>
    <scope>SUMOYLATION [LARGE SCALE ANALYSIS] AT LYS-11; LYS-163 AND LYS-165</scope>
    <scope>IDENTIFICATION BY MASS SPECTROMETRY [LARGE SCALE ANALYSIS]</scope>
</reference>
<reference key="16">
    <citation type="journal article" date="2016" name="Psychiatr. Genet.">
        <title>Identification of a homozygous missense mutation in LRP2 and a hemizygous missense mutation in TSPYL2 in a family with mild intellectual disability.</title>
        <authorList>
            <person name="Vasli N."/>
            <person name="Ahmed I."/>
            <person name="Mittal K."/>
            <person name="Ohadi M."/>
            <person name="Mikhailov A."/>
            <person name="Rafiq M.A."/>
            <person name="Bhatti A."/>
            <person name="Carter M.T."/>
            <person name="Andrade D.M."/>
            <person name="Ayub M."/>
            <person name="Vincent J.B."/>
            <person name="John P."/>
        </authorList>
    </citation>
    <scope>VARIANT MET-262</scope>
</reference>
<gene>
    <name type="primary">TSPYL2</name>
    <name type="synonym">CDA1</name>
    <name type="synonym">DENTT</name>
    <name type="synonym">TSPX</name>
    <name type="ORF">HRIHFB2216</name>
</gene>
<accession>Q9H2G4</accession>
<accession>O94799</accession>
<accession>Q96DG7</accession>
<accession>Q9BZW6</accession>
<name>TSYL2_HUMAN</name>
<feature type="chain" id="PRO_0000289100" description="Testis-specific Y-encoded-like protein 2">
    <location>
        <begin position="1"/>
        <end position="693"/>
    </location>
</feature>
<feature type="region of interest" description="Disordered" evidence="3">
    <location>
        <begin position="1"/>
        <end position="56"/>
    </location>
</feature>
<feature type="region of interest" description="Disordered" evidence="3">
    <location>
        <begin position="104"/>
        <end position="125"/>
    </location>
</feature>
<feature type="region of interest" description="Disordered" evidence="3">
    <location>
        <begin position="175"/>
        <end position="207"/>
    </location>
</feature>
<feature type="region of interest" description="Disordered" evidence="3">
    <location>
        <begin position="474"/>
        <end position="605"/>
    </location>
</feature>
<feature type="region of interest" description="Disordered" evidence="3">
    <location>
        <begin position="627"/>
        <end position="693"/>
    </location>
</feature>
<feature type="compositionally biased region" description="Pro residues" evidence="3">
    <location>
        <begin position="23"/>
        <end position="44"/>
    </location>
</feature>
<feature type="compositionally biased region" description="Basic residues" evidence="3">
    <location>
        <begin position="185"/>
        <end position="202"/>
    </location>
</feature>
<feature type="compositionally biased region" description="Polar residues" evidence="3">
    <location>
        <begin position="487"/>
        <end position="496"/>
    </location>
</feature>
<feature type="compositionally biased region" description="Acidic residues" evidence="3">
    <location>
        <begin position="509"/>
        <end position="519"/>
    </location>
</feature>
<feature type="compositionally biased region" description="Low complexity" evidence="3">
    <location>
        <begin position="531"/>
        <end position="542"/>
    </location>
</feature>
<feature type="compositionally biased region" description="Acidic residues" evidence="3">
    <location>
        <begin position="559"/>
        <end position="602"/>
    </location>
</feature>
<feature type="compositionally biased region" description="Acidic residues" evidence="3">
    <location>
        <begin position="627"/>
        <end position="675"/>
    </location>
</feature>
<feature type="modified residue" description="Phosphoserine" evidence="15">
    <location>
        <position position="18"/>
    </location>
</feature>
<feature type="modified residue" description="Phosphoserine" evidence="6">
    <location>
        <position position="20"/>
    </location>
</feature>
<feature type="modified residue" description="Phosphothreonine" evidence="14">
    <location>
        <position position="340"/>
    </location>
</feature>
<feature type="modified residue" description="Phosphoserine" evidence="2">
    <location>
        <position position="658"/>
    </location>
</feature>
<feature type="modified residue" description="Phosphoserine" evidence="2">
    <location>
        <position position="668"/>
    </location>
</feature>
<feature type="modified residue" description="Phosphoserine" evidence="2">
    <location>
        <position position="671"/>
    </location>
</feature>
<feature type="cross-link" description="Glycyl lysine isopeptide (Lys-Gly) (interchain with G-Cter in SUMO2)" evidence="16">
    <location>
        <position position="11"/>
    </location>
</feature>
<feature type="cross-link" description="Glycyl lysine isopeptide (Lys-Gly) (interchain with G-Cter in SUMO2)" evidence="16">
    <location>
        <position position="163"/>
    </location>
</feature>
<feature type="cross-link" description="Glycyl lysine isopeptide (Lys-Gly) (interchain with G-Cter in SUMO2)" evidence="16">
    <location>
        <position position="165"/>
    </location>
</feature>
<feature type="sequence variant" id="VAR_075536" description="Found in patients with mild intellectual disability; uncertain significance." evidence="12">
    <original>I</original>
    <variation>M</variation>
    <location>
        <position position="262"/>
    </location>
</feature>
<feature type="mutagenesis site" description="Impairs effect on cell proliferation; when associated with A-340." evidence="6">
    <original>S</original>
    <variation>A</variation>
    <location>
        <position position="20"/>
    </location>
</feature>
<feature type="mutagenesis site" description="Impairs effect on cell proliferation; when associated with A-20." evidence="6">
    <original>T</original>
    <variation>A</variation>
    <location>
        <position position="340"/>
    </location>
</feature>
<feature type="sequence conflict" description="In Ref. 6; AAG53596." evidence="13" ref="6">
    <original>D</original>
    <variation>N</variation>
    <location>
        <position position="442"/>
    </location>
</feature>
<feature type="sequence conflict" description="In Ref. 6; AAG53596." evidence="13" ref="6">
    <original>D</original>
    <variation>V</variation>
    <location>
        <position position="566"/>
    </location>
</feature>
<feature type="sequence conflict" description="In Ref. 7; BAA34802." evidence="13" ref="7">
    <original>V</original>
    <variation>G</variation>
    <location>
        <position position="609"/>
    </location>
</feature>
<feature type="sequence conflict" description="In Ref. 7; BAA34802." evidence="13" ref="7">
    <original>K</original>
    <variation>R</variation>
    <location>
        <position position="615"/>
    </location>
</feature>
<organism>
    <name type="scientific">Homo sapiens</name>
    <name type="common">Human</name>
    <dbReference type="NCBI Taxonomy" id="9606"/>
    <lineage>
        <taxon>Eukaryota</taxon>
        <taxon>Metazoa</taxon>
        <taxon>Chordata</taxon>
        <taxon>Craniata</taxon>
        <taxon>Vertebrata</taxon>
        <taxon>Euteleostomi</taxon>
        <taxon>Mammalia</taxon>
        <taxon>Eutheria</taxon>
        <taxon>Euarchontoglires</taxon>
        <taxon>Primates</taxon>
        <taxon>Haplorrhini</taxon>
        <taxon>Catarrhini</taxon>
        <taxon>Hominidae</taxon>
        <taxon>Homo</taxon>
    </lineage>
</organism>
<sequence length="693" mass="79435">MDRPDEGPPAKTRRLSSSESPQRDPPPPPPPPPLLRLPLPPPQQRPRLQEETEAAQVLADMRGVGLGPALPPPPPYVILEEGGIRAYFTLGAECPGWDSTIESGYGEAPPPTESLEALPTPEASGGSLEIDFQVVQSSSFGGEGALETCSAVGWAPQRLVDPKSKEEAIIIVEDEDEDERESMRSSRRRRRRRRRKQRKVKRESRERNAERMESILQALEDIQLDLEAVNIKAGKAFLRLKRKFIQMRRPFLERRDLIIQHIPGFWVKAFLNHPRISILINRRDEDIFRYLTNLQVQDLRHISMGYKMKLYFQTNPYFTNMVIVKEFQRNRSGRLVSHSTPIRWHRGQEPQARRHGNQDASHSFFSWFSNHSLPEADRIAEIIKNDLWVNPLRYYLRERGSRIKRKKQEMKKRKTRGRCEVVIMEDAPDYYAVEDIFSEISDIDETIHDIKISDFMETTDYFETTDNEITDINENICDSENPDHNEVPNNETTDNNESADDHETTDNNESADDNNENPEDNNKNTDDNEENPNNNENTYGNNFFKGGFWGSHGNNQDSSDSDNEADEASDDEDNDGNEGDNEGSDDDGNEGDNEGSDDDDRDIEYYEKVIEDFDKDQADYEDVIEIISDESVEEEGIEEGIQQDEDIYEEGNYEEEGSEDVWEEGEDSDDSDLEDVLQVPNGWANPGKRGKTG</sequence>
<evidence type="ECO:0000250" key="1"/>
<evidence type="ECO:0000250" key="2">
    <source>
        <dbReference type="UniProtKB" id="Q7TQI8"/>
    </source>
</evidence>
<evidence type="ECO:0000256" key="3">
    <source>
        <dbReference type="SAM" id="MobiDB-lite"/>
    </source>
</evidence>
<evidence type="ECO:0000269" key="4">
    <source>
    </source>
</evidence>
<evidence type="ECO:0000269" key="5">
    <source>
    </source>
</evidence>
<evidence type="ECO:0000269" key="6">
    <source>
    </source>
</evidence>
<evidence type="ECO:0000269" key="7">
    <source>
    </source>
</evidence>
<evidence type="ECO:0000269" key="8">
    <source>
    </source>
</evidence>
<evidence type="ECO:0000269" key="9">
    <source>
    </source>
</evidence>
<evidence type="ECO:0000269" key="10">
    <source>
    </source>
</evidence>
<evidence type="ECO:0000269" key="11">
    <source>
    </source>
</evidence>
<evidence type="ECO:0000269" key="12">
    <source>
    </source>
</evidence>
<evidence type="ECO:0000305" key="13"/>
<evidence type="ECO:0000305" key="14">
    <source>
    </source>
</evidence>
<evidence type="ECO:0007744" key="15">
    <source>
    </source>
</evidence>
<evidence type="ECO:0007744" key="16">
    <source>
    </source>
</evidence>
<dbReference type="EMBL" id="AF273046">
    <property type="protein sequence ID" value="AAG34906.1"/>
    <property type="molecule type" value="mRNA"/>
</dbReference>
<dbReference type="EMBL" id="AY040871">
    <property type="protein sequence ID" value="AAK72407.1"/>
    <property type="molecule type" value="mRNA"/>
</dbReference>
<dbReference type="EMBL" id="AL713652">
    <property type="protein sequence ID" value="CAD28461.1"/>
    <property type="molecule type" value="mRNA"/>
</dbReference>
<dbReference type="EMBL" id="BX322635">
    <property type="status" value="NOT_ANNOTATED_CDS"/>
    <property type="molecule type" value="Genomic_DNA"/>
</dbReference>
<dbReference type="EMBL" id="BC001566">
    <property type="protein sequence ID" value="AAH01566.1"/>
    <property type="molecule type" value="mRNA"/>
</dbReference>
<dbReference type="EMBL" id="BC024270">
    <property type="protein sequence ID" value="AAH24270.1"/>
    <property type="molecule type" value="mRNA"/>
</dbReference>
<dbReference type="EMBL" id="AF254794">
    <property type="protein sequence ID" value="AAG53596.1"/>
    <property type="status" value="ALT_INIT"/>
    <property type="molecule type" value="mRNA"/>
</dbReference>
<dbReference type="EMBL" id="AB015345">
    <property type="protein sequence ID" value="BAA34802.1"/>
    <property type="molecule type" value="mRNA"/>
</dbReference>
<dbReference type="CCDS" id="CCDS14350.1"/>
<dbReference type="RefSeq" id="NP_071400.1">
    <property type="nucleotide sequence ID" value="NM_022117.4"/>
</dbReference>
<dbReference type="SMR" id="Q9H2G4"/>
<dbReference type="BioGRID" id="122034">
    <property type="interactions" value="105"/>
</dbReference>
<dbReference type="FunCoup" id="Q9H2G4">
    <property type="interactions" value="1605"/>
</dbReference>
<dbReference type="IntAct" id="Q9H2G4">
    <property type="interactions" value="76"/>
</dbReference>
<dbReference type="MINT" id="Q9H2G4"/>
<dbReference type="STRING" id="9606.ENSP00000364591"/>
<dbReference type="GlyGen" id="Q9H2G4">
    <property type="glycosylation" value="1 site"/>
</dbReference>
<dbReference type="iPTMnet" id="Q9H2G4"/>
<dbReference type="PhosphoSitePlus" id="Q9H2G4"/>
<dbReference type="BioMuta" id="TSPYL2"/>
<dbReference type="DMDM" id="74752604"/>
<dbReference type="jPOST" id="Q9H2G4"/>
<dbReference type="MassIVE" id="Q9H2G4"/>
<dbReference type="PaxDb" id="9606-ENSP00000364591"/>
<dbReference type="PeptideAtlas" id="Q9H2G4"/>
<dbReference type="ProteomicsDB" id="80546"/>
<dbReference type="Pumba" id="Q9H2G4"/>
<dbReference type="Antibodypedia" id="12456">
    <property type="antibodies" value="258 antibodies from 36 providers"/>
</dbReference>
<dbReference type="DNASU" id="64061"/>
<dbReference type="Ensembl" id="ENST00000375442.8">
    <property type="protein sequence ID" value="ENSP00000364591.4"/>
    <property type="gene ID" value="ENSG00000184205.14"/>
</dbReference>
<dbReference type="GeneID" id="64061"/>
<dbReference type="KEGG" id="hsa:64061"/>
<dbReference type="MANE-Select" id="ENST00000375442.8">
    <property type="protein sequence ID" value="ENSP00000364591.4"/>
    <property type="RefSeq nucleotide sequence ID" value="NM_022117.4"/>
    <property type="RefSeq protein sequence ID" value="NP_071400.1"/>
</dbReference>
<dbReference type="UCSC" id="uc004drw.4">
    <property type="organism name" value="human"/>
</dbReference>
<dbReference type="AGR" id="HGNC:24358"/>
<dbReference type="CTD" id="64061"/>
<dbReference type="DisGeNET" id="64061"/>
<dbReference type="GeneCards" id="TSPYL2"/>
<dbReference type="HGNC" id="HGNC:24358">
    <property type="gene designation" value="TSPYL2"/>
</dbReference>
<dbReference type="HPA" id="ENSG00000184205">
    <property type="expression patterns" value="Low tissue specificity"/>
</dbReference>
<dbReference type="MIM" id="300564">
    <property type="type" value="gene"/>
</dbReference>
<dbReference type="neXtProt" id="NX_Q9H2G4"/>
<dbReference type="OpenTargets" id="ENSG00000184205"/>
<dbReference type="PharmGKB" id="PA134930188"/>
<dbReference type="VEuPathDB" id="HostDB:ENSG00000184205"/>
<dbReference type="eggNOG" id="KOG1508">
    <property type="taxonomic scope" value="Eukaryota"/>
</dbReference>
<dbReference type="GeneTree" id="ENSGT00940000162496"/>
<dbReference type="HOGENOM" id="CLU_025445_0_0_1"/>
<dbReference type="InParanoid" id="Q9H2G4"/>
<dbReference type="OMA" id="QDTSHSF"/>
<dbReference type="OrthoDB" id="19419at2759"/>
<dbReference type="PAN-GO" id="Q9H2G4">
    <property type="GO annotations" value="4 GO annotations based on evolutionary models"/>
</dbReference>
<dbReference type="PhylomeDB" id="Q9H2G4"/>
<dbReference type="TreeFam" id="TF313386"/>
<dbReference type="PathwayCommons" id="Q9H2G4"/>
<dbReference type="Reactome" id="R-HSA-381038">
    <property type="pathway name" value="XBP1(S) activates chaperone genes"/>
</dbReference>
<dbReference type="SignaLink" id="Q9H2G4"/>
<dbReference type="SIGNOR" id="Q9H2G4"/>
<dbReference type="BioGRID-ORCS" id="64061">
    <property type="hits" value="17 hits in 783 CRISPR screens"/>
</dbReference>
<dbReference type="ChiTaRS" id="TSPYL2">
    <property type="organism name" value="human"/>
</dbReference>
<dbReference type="GeneWiki" id="TSPYL2"/>
<dbReference type="GenomeRNAi" id="64061"/>
<dbReference type="Pharos" id="Q9H2G4">
    <property type="development level" value="Tbio"/>
</dbReference>
<dbReference type="PRO" id="PR:Q9H2G4"/>
<dbReference type="Proteomes" id="UP000005640">
    <property type="component" value="Chromosome X"/>
</dbReference>
<dbReference type="RNAct" id="Q9H2G4">
    <property type="molecule type" value="protein"/>
</dbReference>
<dbReference type="Bgee" id="ENSG00000184205">
    <property type="expression patterns" value="Expressed in adenohypophysis and 196 other cell types or tissues"/>
</dbReference>
<dbReference type="ExpressionAtlas" id="Q9H2G4">
    <property type="expression patterns" value="baseline and differential"/>
</dbReference>
<dbReference type="GO" id="GO:0000785">
    <property type="term" value="C:chromatin"/>
    <property type="evidence" value="ECO:0000318"/>
    <property type="project" value="GO_Central"/>
</dbReference>
<dbReference type="GO" id="GO:0005737">
    <property type="term" value="C:cytoplasm"/>
    <property type="evidence" value="ECO:0007669"/>
    <property type="project" value="UniProtKB-SubCell"/>
</dbReference>
<dbReference type="GO" id="GO:0005730">
    <property type="term" value="C:nucleolus"/>
    <property type="evidence" value="ECO:0000314"/>
    <property type="project" value="UniProtKB"/>
</dbReference>
<dbReference type="GO" id="GO:0005654">
    <property type="term" value="C:nucleoplasm"/>
    <property type="evidence" value="ECO:0000304"/>
    <property type="project" value="Reactome"/>
</dbReference>
<dbReference type="GO" id="GO:0005634">
    <property type="term" value="C:nucleus"/>
    <property type="evidence" value="ECO:0000314"/>
    <property type="project" value="UniProtKB"/>
</dbReference>
<dbReference type="GO" id="GO:0003682">
    <property type="term" value="F:chromatin binding"/>
    <property type="evidence" value="ECO:0000318"/>
    <property type="project" value="GO_Central"/>
</dbReference>
<dbReference type="GO" id="GO:0042393">
    <property type="term" value="F:histone binding"/>
    <property type="evidence" value="ECO:0000318"/>
    <property type="project" value="GO_Central"/>
</dbReference>
<dbReference type="GO" id="GO:0000182">
    <property type="term" value="F:rDNA binding"/>
    <property type="evidence" value="ECO:0000303"/>
    <property type="project" value="UniProtKB"/>
</dbReference>
<dbReference type="GO" id="GO:0045786">
    <property type="term" value="P:negative regulation of cell cycle"/>
    <property type="evidence" value="ECO:0000303"/>
    <property type="project" value="UniProtKB"/>
</dbReference>
<dbReference type="GO" id="GO:0030308">
    <property type="term" value="P:negative regulation of cell growth"/>
    <property type="evidence" value="ECO:0000314"/>
    <property type="project" value="UniProtKB"/>
</dbReference>
<dbReference type="GO" id="GO:0008156">
    <property type="term" value="P:negative regulation of DNA replication"/>
    <property type="evidence" value="ECO:0000314"/>
    <property type="project" value="UniProtKB"/>
</dbReference>
<dbReference type="GO" id="GO:0006334">
    <property type="term" value="P:nucleosome assembly"/>
    <property type="evidence" value="ECO:0007669"/>
    <property type="project" value="InterPro"/>
</dbReference>
<dbReference type="GO" id="GO:0045859">
    <property type="term" value="P:regulation of protein kinase activity"/>
    <property type="evidence" value="ECO:0000314"/>
    <property type="project" value="UniProtKB"/>
</dbReference>
<dbReference type="GO" id="GO:0009966">
    <property type="term" value="P:regulation of signal transduction"/>
    <property type="evidence" value="ECO:0000303"/>
    <property type="project" value="UniProtKB"/>
</dbReference>
<dbReference type="FunFam" id="1.20.5.1500:FF:000006">
    <property type="entry name" value="Testis-specific Y-encoded-like protein 2"/>
    <property type="match status" value="1"/>
</dbReference>
<dbReference type="FunFam" id="3.30.1120.90:FF:000002">
    <property type="entry name" value="Testis-specific Y-encoded-like protein 2"/>
    <property type="match status" value="1"/>
</dbReference>
<dbReference type="Gene3D" id="1.20.5.1500">
    <property type="match status" value="1"/>
</dbReference>
<dbReference type="Gene3D" id="3.30.1120.90">
    <property type="entry name" value="Nucleosome assembly protein"/>
    <property type="match status" value="1"/>
</dbReference>
<dbReference type="InterPro" id="IPR037231">
    <property type="entry name" value="NAP-like_sf"/>
</dbReference>
<dbReference type="InterPro" id="IPR002164">
    <property type="entry name" value="NAP_family"/>
</dbReference>
<dbReference type="PANTHER" id="PTHR11875">
    <property type="entry name" value="TESTIS-SPECIFIC Y-ENCODED PROTEIN"/>
    <property type="match status" value="1"/>
</dbReference>
<dbReference type="Pfam" id="PF00956">
    <property type="entry name" value="NAP"/>
    <property type="match status" value="1"/>
</dbReference>
<dbReference type="SUPFAM" id="SSF143113">
    <property type="entry name" value="NAP-like"/>
    <property type="match status" value="1"/>
</dbReference>
<proteinExistence type="evidence at protein level"/>
<keyword id="KW-0131">Cell cycle</keyword>
<keyword id="KW-0156">Chromatin regulator</keyword>
<keyword id="KW-0963">Cytoplasm</keyword>
<keyword id="KW-1017">Isopeptide bond</keyword>
<keyword id="KW-0539">Nucleus</keyword>
<keyword id="KW-0597">Phosphoprotein</keyword>
<keyword id="KW-1267">Proteomics identification</keyword>
<keyword id="KW-1185">Reference proteome</keyword>
<keyword id="KW-0804">Transcription</keyword>
<keyword id="KW-0805">Transcription regulation</keyword>
<keyword id="KW-0832">Ubl conjugation</keyword>
<protein>
    <recommendedName>
        <fullName>Testis-specific Y-encoded-like protein 2</fullName>
        <shortName>TSPY-like protein 2</shortName>
    </recommendedName>
    <alternativeName>
        <fullName>Cell division autoantigen 1</fullName>
    </alternativeName>
    <alternativeName>
        <fullName>Cutaneous T-cell lymphoma-associated antigen se20-4</fullName>
        <shortName>CTCL-associated antigen se20-4</shortName>
    </alternativeName>
    <alternativeName>
        <fullName>Differentially-expressed nucleolar TGF-beta1 target protein</fullName>
    </alternativeName>
    <alternativeName>
        <fullName>Nuclear protein of 79 kDa</fullName>
        <shortName>NP79</shortName>
    </alternativeName>
</protein>